<dbReference type="EMBL" id="AE014075">
    <property type="protein sequence ID" value="AAN78995.1"/>
    <property type="status" value="ALT_INIT"/>
    <property type="molecule type" value="Genomic_DNA"/>
</dbReference>
<dbReference type="RefSeq" id="WP_000007629.1">
    <property type="nucleotide sequence ID" value="NZ_CP051263.1"/>
</dbReference>
<dbReference type="SMR" id="P0ADZ8"/>
<dbReference type="STRING" id="199310.c0517"/>
<dbReference type="GeneID" id="93777053"/>
<dbReference type="KEGG" id="ecc:c0517"/>
<dbReference type="eggNOG" id="COG1862">
    <property type="taxonomic scope" value="Bacteria"/>
</dbReference>
<dbReference type="HOGENOM" id="CLU_116157_2_1_6"/>
<dbReference type="Proteomes" id="UP000001410">
    <property type="component" value="Chromosome"/>
</dbReference>
<dbReference type="GO" id="GO:0005886">
    <property type="term" value="C:plasma membrane"/>
    <property type="evidence" value="ECO:0007669"/>
    <property type="project" value="UniProtKB-SubCell"/>
</dbReference>
<dbReference type="GO" id="GO:0015031">
    <property type="term" value="P:protein transport"/>
    <property type="evidence" value="ECO:0007669"/>
    <property type="project" value="UniProtKB-KW"/>
</dbReference>
<dbReference type="InterPro" id="IPR003849">
    <property type="entry name" value="Preprotein_translocase_YajC"/>
</dbReference>
<dbReference type="NCBIfam" id="TIGR00739">
    <property type="entry name" value="yajC"/>
    <property type="match status" value="1"/>
</dbReference>
<dbReference type="PANTHER" id="PTHR33909">
    <property type="entry name" value="SEC TRANSLOCON ACCESSORY COMPLEX SUBUNIT YAJC"/>
    <property type="match status" value="1"/>
</dbReference>
<dbReference type="PANTHER" id="PTHR33909:SF1">
    <property type="entry name" value="SEC TRANSLOCON ACCESSORY COMPLEX SUBUNIT YAJC"/>
    <property type="match status" value="1"/>
</dbReference>
<dbReference type="Pfam" id="PF02699">
    <property type="entry name" value="YajC"/>
    <property type="match status" value="1"/>
</dbReference>
<dbReference type="PRINTS" id="PR01853">
    <property type="entry name" value="YAJCTRNLCASE"/>
</dbReference>
<dbReference type="SMART" id="SM01323">
    <property type="entry name" value="YajC"/>
    <property type="match status" value="1"/>
</dbReference>
<gene>
    <name type="primary">yajC</name>
    <name type="ordered locus">c0517</name>
</gene>
<feature type="chain" id="PRO_0000097015" description="Sec translocon accessory complex subunit YajC">
    <location>
        <begin position="1"/>
        <end position="110"/>
    </location>
</feature>
<feature type="transmembrane region" description="Helical" evidence="2">
    <location>
        <begin position="19"/>
        <end position="39"/>
    </location>
</feature>
<organism>
    <name type="scientific">Escherichia coli O6:H1 (strain CFT073 / ATCC 700928 / UPEC)</name>
    <dbReference type="NCBI Taxonomy" id="199310"/>
    <lineage>
        <taxon>Bacteria</taxon>
        <taxon>Pseudomonadati</taxon>
        <taxon>Pseudomonadota</taxon>
        <taxon>Gammaproteobacteria</taxon>
        <taxon>Enterobacterales</taxon>
        <taxon>Enterobacteriaceae</taxon>
        <taxon>Escherichia</taxon>
    </lineage>
</organism>
<proteinExistence type="inferred from homology"/>
<keyword id="KW-0997">Cell inner membrane</keyword>
<keyword id="KW-1003">Cell membrane</keyword>
<keyword id="KW-0472">Membrane</keyword>
<keyword id="KW-0653">Protein transport</keyword>
<keyword id="KW-1185">Reference proteome</keyword>
<keyword id="KW-0811">Translocation</keyword>
<keyword id="KW-0812">Transmembrane</keyword>
<keyword id="KW-1133">Transmembrane helix</keyword>
<keyword id="KW-0813">Transport</keyword>
<protein>
    <recommendedName>
        <fullName>Sec translocon accessory complex subunit YajC</fullName>
    </recommendedName>
</protein>
<evidence type="ECO:0000250" key="1">
    <source>
        <dbReference type="UniProtKB" id="P0ADZ7"/>
    </source>
</evidence>
<evidence type="ECO:0000255" key="2"/>
<evidence type="ECO:0000305" key="3"/>
<accession>P0ADZ8</accession>
<accession>P19677</accession>
<comment type="function">
    <text evidence="1">The SecYEG-SecDF-YajC-YidC holo-translocon (HTL) protein secretase/insertase is a supercomplex required for protein secretion, insertion of proteins into membranes, and assembly of membrane protein complexes. While the SecYEG complex is essential for assembly of a number of proteins and complexes, the SecDF-YajC-YidC subcomplex facilitates these functions.</text>
</comment>
<comment type="subunit">
    <text evidence="1">Part of the SecDF-YidC-YajC translocase complex. The SecDF-YidC-YajC translocase forms a supercomplex with SecYEG, called the holo-translocon (HTL).</text>
</comment>
<comment type="subcellular location">
    <subcellularLocation>
        <location evidence="1">Cell inner membrane</location>
        <topology evidence="1">Single-pass membrane protein</topology>
    </subcellularLocation>
</comment>
<comment type="similarity">
    <text evidence="3">Belongs to the YajC family.</text>
</comment>
<comment type="sequence caution" evidence="3">
    <conflict type="erroneous initiation">
        <sequence resource="EMBL-CDS" id="AAN78995"/>
    </conflict>
    <text>Extended N-terminus.</text>
</comment>
<reference key="1">
    <citation type="journal article" date="2002" name="Proc. Natl. Acad. Sci. U.S.A.">
        <title>Extensive mosaic structure revealed by the complete genome sequence of uropathogenic Escherichia coli.</title>
        <authorList>
            <person name="Welch R.A."/>
            <person name="Burland V."/>
            <person name="Plunkett G. III"/>
            <person name="Redford P."/>
            <person name="Roesch P."/>
            <person name="Rasko D."/>
            <person name="Buckles E.L."/>
            <person name="Liou S.-R."/>
            <person name="Boutin A."/>
            <person name="Hackett J."/>
            <person name="Stroud D."/>
            <person name="Mayhew G.F."/>
            <person name="Rose D.J."/>
            <person name="Zhou S."/>
            <person name="Schwartz D.C."/>
            <person name="Perna N.T."/>
            <person name="Mobley H.L.T."/>
            <person name="Donnenberg M.S."/>
            <person name="Blattner F.R."/>
        </authorList>
    </citation>
    <scope>NUCLEOTIDE SEQUENCE [LARGE SCALE GENOMIC DNA]</scope>
    <source>
        <strain>CFT073 / ATCC 700928 / UPEC</strain>
    </source>
</reference>
<sequence>MSFFISDAVAATGAPAQGSPMSLILMLVVFGLIFYFMILRPQQKRTKEHKKLMDSIAKGDEVLTNGGLVGRVTKVAENGYIAIALNDTTEVVIKRDFVAAVLPKGTMKAL</sequence>
<name>YAJC_ECOL6</name>